<feature type="peptide" id="PRO_0000011338" description="Glucagon" evidence="2 3">
    <location>
        <begin position="1"/>
        <end position="29"/>
    </location>
</feature>
<feature type="peptide" id="PRO_0000011339" description="Glucagon-like peptide" evidence="2 3">
    <location>
        <begin position="38"/>
        <end position="71"/>
    </location>
</feature>
<feature type="sequence conflict" description="In Ref. 2; AA sequence." evidence="4" ref="2">
    <original>E</original>
    <variation>D</variation>
    <location>
        <position position="53"/>
    </location>
</feature>
<feature type="non-terminal residue">
    <location>
        <position position="1"/>
    </location>
</feature>
<feature type="non-terminal residue">
    <location>
        <position position="71"/>
    </location>
</feature>
<keyword id="KW-0903">Direct protein sequencing</keyword>
<keyword id="KW-0372">Hormone</keyword>
<keyword id="KW-0964">Secreted</keyword>
<name>GLUC_ICTPU</name>
<gene>
    <name type="primary">gcg</name>
</gene>
<organism>
    <name type="scientific">Ictalurus punctatus</name>
    <name type="common">Channel catfish</name>
    <name type="synonym">Silurus punctatus</name>
    <dbReference type="NCBI Taxonomy" id="7998"/>
    <lineage>
        <taxon>Eukaryota</taxon>
        <taxon>Metazoa</taxon>
        <taxon>Chordata</taxon>
        <taxon>Craniata</taxon>
        <taxon>Vertebrata</taxon>
        <taxon>Euteleostomi</taxon>
        <taxon>Actinopterygii</taxon>
        <taxon>Neopterygii</taxon>
        <taxon>Teleostei</taxon>
        <taxon>Ostariophysi</taxon>
        <taxon>Siluriformes</taxon>
        <taxon>Ictaluridae</taxon>
        <taxon>Ictalurus</taxon>
    </lineage>
</organism>
<accession>P04093</accession>
<sequence>HSEGTFSNDYSKYLETRRAQDFVQWLMNSXXXXXXXXHADGTYTSDVSSYLQEQAAKDFITWLKSGQPKPE</sequence>
<comment type="function">
    <molecule>Glucagon</molecule>
    <text evidence="1">Plays a key role in glucose metabolism and homeostasis. Regulates blood glucose by increasing gluconeogenesis and decreasing glycolysis.</text>
</comment>
<comment type="subcellular location">
    <subcellularLocation>
        <location>Secreted</location>
    </subcellularLocation>
</comment>
<comment type="induction">
    <text>Produced in the A cells of the islets of Langerhans in response to a drop in blood sugar concentration.</text>
</comment>
<comment type="miscellaneous">
    <text>X's in the sequence were included by homology with American goosefish sequences.</text>
</comment>
<comment type="similarity">
    <text evidence="4">Belongs to the glucagon family.</text>
</comment>
<dbReference type="PIR" id="A05166">
    <property type="entry name" value="GCIDC"/>
</dbReference>
<dbReference type="STRING" id="7998.ENSIPUP00000013350"/>
<dbReference type="Proteomes" id="UP000221080">
    <property type="component" value="Unplaced"/>
</dbReference>
<dbReference type="GO" id="GO:0005576">
    <property type="term" value="C:extracellular region"/>
    <property type="evidence" value="ECO:0007669"/>
    <property type="project" value="UniProtKB-SubCell"/>
</dbReference>
<dbReference type="GO" id="GO:0031769">
    <property type="term" value="F:glucagon receptor binding"/>
    <property type="evidence" value="ECO:0007669"/>
    <property type="project" value="TreeGrafter"/>
</dbReference>
<dbReference type="GO" id="GO:0005179">
    <property type="term" value="F:hormone activity"/>
    <property type="evidence" value="ECO:0007669"/>
    <property type="project" value="UniProtKB-KW"/>
</dbReference>
<dbReference type="GO" id="GO:0042594">
    <property type="term" value="P:response to starvation"/>
    <property type="evidence" value="ECO:0007669"/>
    <property type="project" value="TreeGrafter"/>
</dbReference>
<dbReference type="Gene3D" id="6.10.250.590">
    <property type="match status" value="2"/>
</dbReference>
<dbReference type="InterPro" id="IPR015550">
    <property type="entry name" value="Glucagon"/>
</dbReference>
<dbReference type="InterPro" id="IPR000532">
    <property type="entry name" value="Glucagon_GIP_secretin_VIP"/>
</dbReference>
<dbReference type="PANTHER" id="PTHR11418">
    <property type="entry name" value="GLUCAGON"/>
    <property type="match status" value="1"/>
</dbReference>
<dbReference type="PANTHER" id="PTHR11418:SF0">
    <property type="entry name" value="PRO-GLUCAGON"/>
    <property type="match status" value="1"/>
</dbReference>
<dbReference type="Pfam" id="PF00123">
    <property type="entry name" value="Hormone_2"/>
    <property type="match status" value="2"/>
</dbReference>
<dbReference type="PRINTS" id="PR00275">
    <property type="entry name" value="GLUCAGON"/>
</dbReference>
<dbReference type="SMART" id="SM00070">
    <property type="entry name" value="GLUCA"/>
    <property type="match status" value="2"/>
</dbReference>
<dbReference type="PROSITE" id="PS00260">
    <property type="entry name" value="GLUCAGON"/>
    <property type="match status" value="2"/>
</dbReference>
<protein>
    <recommendedName>
        <fullName>Pro-glucagon</fullName>
    </recommendedName>
    <component>
        <recommendedName>
            <fullName>Glucagon</fullName>
        </recommendedName>
    </component>
    <component>
        <recommendedName>
            <fullName>Glucagon-like peptide</fullName>
        </recommendedName>
    </component>
</protein>
<reference key="1">
    <citation type="journal article" date="1987" name="Biochem. Biophys. Res. Commun.">
        <title>Biological activities of catfish glucagon and glucagon-like peptide.</title>
        <authorList>
            <person name="Hoosein N.M."/>
            <person name="Mahrenholz A.M."/>
            <person name="Andrews P.C."/>
            <person name="Gurd R.S."/>
        </authorList>
    </citation>
    <scope>PROTEIN SEQUENCE</scope>
    <source>
        <tissue>Pancreas</tissue>
    </source>
</reference>
<reference key="2">
    <citation type="journal article" date="1985" name="J. Biol. Chem.">
        <title>Isolation and structures of glucagon and glucagon-like peptide from catfish pancreas.</title>
        <authorList>
            <person name="Andrews P.C."/>
            <person name="Ronner P."/>
        </authorList>
    </citation>
    <scope>PROTEIN SEQUENCE</scope>
    <source>
        <tissue>Pancreas</tissue>
    </source>
</reference>
<proteinExistence type="evidence at protein level"/>
<evidence type="ECO:0000250" key="1">
    <source>
        <dbReference type="UniProtKB" id="P01275"/>
    </source>
</evidence>
<evidence type="ECO:0000269" key="2">
    <source>
    </source>
</evidence>
<evidence type="ECO:0000269" key="3">
    <source>
    </source>
</evidence>
<evidence type="ECO:0000305" key="4"/>